<accession>B9M597</accession>
<reference key="1">
    <citation type="submission" date="2009-01" db="EMBL/GenBank/DDBJ databases">
        <title>Complete sequence of Geobacter sp. FRC-32.</title>
        <authorList>
            <consortium name="US DOE Joint Genome Institute"/>
            <person name="Lucas S."/>
            <person name="Copeland A."/>
            <person name="Lapidus A."/>
            <person name="Glavina del Rio T."/>
            <person name="Dalin E."/>
            <person name="Tice H."/>
            <person name="Bruce D."/>
            <person name="Goodwin L."/>
            <person name="Pitluck S."/>
            <person name="Saunders E."/>
            <person name="Brettin T."/>
            <person name="Detter J.C."/>
            <person name="Han C."/>
            <person name="Larimer F."/>
            <person name="Land M."/>
            <person name="Hauser L."/>
            <person name="Kyrpides N."/>
            <person name="Ovchinnikova G."/>
            <person name="Kostka J."/>
            <person name="Richardson P."/>
        </authorList>
    </citation>
    <scope>NUCLEOTIDE SEQUENCE [LARGE SCALE GENOMIC DNA]</scope>
    <source>
        <strain>DSM 22248 / JCM 15807 / FRC-32</strain>
    </source>
</reference>
<name>RNH2_GEODF</name>
<dbReference type="EC" id="3.1.26.4" evidence="1"/>
<dbReference type="EMBL" id="CP001390">
    <property type="protein sequence ID" value="ACM19852.1"/>
    <property type="molecule type" value="Genomic_DNA"/>
</dbReference>
<dbReference type="RefSeq" id="WP_012646581.1">
    <property type="nucleotide sequence ID" value="NC_011979.1"/>
</dbReference>
<dbReference type="SMR" id="B9M597"/>
<dbReference type="STRING" id="316067.Geob_1493"/>
<dbReference type="KEGG" id="geo:Geob_1493"/>
<dbReference type="eggNOG" id="COG0164">
    <property type="taxonomic scope" value="Bacteria"/>
</dbReference>
<dbReference type="HOGENOM" id="CLU_036532_3_2_7"/>
<dbReference type="OrthoDB" id="9803420at2"/>
<dbReference type="Proteomes" id="UP000007721">
    <property type="component" value="Chromosome"/>
</dbReference>
<dbReference type="GO" id="GO:0005737">
    <property type="term" value="C:cytoplasm"/>
    <property type="evidence" value="ECO:0007669"/>
    <property type="project" value="UniProtKB-SubCell"/>
</dbReference>
<dbReference type="GO" id="GO:0032299">
    <property type="term" value="C:ribonuclease H2 complex"/>
    <property type="evidence" value="ECO:0007669"/>
    <property type="project" value="TreeGrafter"/>
</dbReference>
<dbReference type="GO" id="GO:0030145">
    <property type="term" value="F:manganese ion binding"/>
    <property type="evidence" value="ECO:0007669"/>
    <property type="project" value="UniProtKB-UniRule"/>
</dbReference>
<dbReference type="GO" id="GO:0003723">
    <property type="term" value="F:RNA binding"/>
    <property type="evidence" value="ECO:0007669"/>
    <property type="project" value="InterPro"/>
</dbReference>
<dbReference type="GO" id="GO:0004523">
    <property type="term" value="F:RNA-DNA hybrid ribonuclease activity"/>
    <property type="evidence" value="ECO:0007669"/>
    <property type="project" value="UniProtKB-UniRule"/>
</dbReference>
<dbReference type="GO" id="GO:0043137">
    <property type="term" value="P:DNA replication, removal of RNA primer"/>
    <property type="evidence" value="ECO:0007669"/>
    <property type="project" value="TreeGrafter"/>
</dbReference>
<dbReference type="GO" id="GO:0006298">
    <property type="term" value="P:mismatch repair"/>
    <property type="evidence" value="ECO:0007669"/>
    <property type="project" value="TreeGrafter"/>
</dbReference>
<dbReference type="CDD" id="cd07182">
    <property type="entry name" value="RNase_HII_bacteria_HII_like"/>
    <property type="match status" value="1"/>
</dbReference>
<dbReference type="FunFam" id="3.30.420.10:FF:000006">
    <property type="entry name" value="Ribonuclease HII"/>
    <property type="match status" value="1"/>
</dbReference>
<dbReference type="Gene3D" id="3.30.420.10">
    <property type="entry name" value="Ribonuclease H-like superfamily/Ribonuclease H"/>
    <property type="match status" value="1"/>
</dbReference>
<dbReference type="HAMAP" id="MF_00052_B">
    <property type="entry name" value="RNase_HII_B"/>
    <property type="match status" value="1"/>
</dbReference>
<dbReference type="InterPro" id="IPR022898">
    <property type="entry name" value="RNase_HII"/>
</dbReference>
<dbReference type="InterPro" id="IPR001352">
    <property type="entry name" value="RNase_HII/HIII"/>
</dbReference>
<dbReference type="InterPro" id="IPR024567">
    <property type="entry name" value="RNase_HII/HIII_dom"/>
</dbReference>
<dbReference type="InterPro" id="IPR012337">
    <property type="entry name" value="RNaseH-like_sf"/>
</dbReference>
<dbReference type="InterPro" id="IPR036397">
    <property type="entry name" value="RNaseH_sf"/>
</dbReference>
<dbReference type="NCBIfam" id="NF000594">
    <property type="entry name" value="PRK00015.1-1"/>
    <property type="match status" value="1"/>
</dbReference>
<dbReference type="NCBIfam" id="NF000595">
    <property type="entry name" value="PRK00015.1-3"/>
    <property type="match status" value="1"/>
</dbReference>
<dbReference type="PANTHER" id="PTHR10954">
    <property type="entry name" value="RIBONUCLEASE H2 SUBUNIT A"/>
    <property type="match status" value="1"/>
</dbReference>
<dbReference type="PANTHER" id="PTHR10954:SF18">
    <property type="entry name" value="RIBONUCLEASE HII"/>
    <property type="match status" value="1"/>
</dbReference>
<dbReference type="Pfam" id="PF01351">
    <property type="entry name" value="RNase_HII"/>
    <property type="match status" value="1"/>
</dbReference>
<dbReference type="SUPFAM" id="SSF53098">
    <property type="entry name" value="Ribonuclease H-like"/>
    <property type="match status" value="1"/>
</dbReference>
<dbReference type="PROSITE" id="PS51975">
    <property type="entry name" value="RNASE_H_2"/>
    <property type="match status" value="1"/>
</dbReference>
<organism>
    <name type="scientific">Geotalea daltonii (strain DSM 22248 / JCM 15807 / FRC-32)</name>
    <name type="common">Geobacter daltonii</name>
    <dbReference type="NCBI Taxonomy" id="316067"/>
    <lineage>
        <taxon>Bacteria</taxon>
        <taxon>Pseudomonadati</taxon>
        <taxon>Thermodesulfobacteriota</taxon>
        <taxon>Desulfuromonadia</taxon>
        <taxon>Geobacterales</taxon>
        <taxon>Geobacteraceae</taxon>
        <taxon>Geotalea</taxon>
    </lineage>
</organism>
<keyword id="KW-0963">Cytoplasm</keyword>
<keyword id="KW-0255">Endonuclease</keyword>
<keyword id="KW-0378">Hydrolase</keyword>
<keyword id="KW-0464">Manganese</keyword>
<keyword id="KW-0479">Metal-binding</keyword>
<keyword id="KW-0540">Nuclease</keyword>
<keyword id="KW-1185">Reference proteome</keyword>
<proteinExistence type="inferred from homology"/>
<comment type="function">
    <text evidence="1">Endonuclease that specifically degrades the RNA of RNA-DNA hybrids.</text>
</comment>
<comment type="catalytic activity">
    <reaction evidence="1">
        <text>Endonucleolytic cleavage to 5'-phosphomonoester.</text>
        <dbReference type="EC" id="3.1.26.4"/>
    </reaction>
</comment>
<comment type="cofactor">
    <cofactor evidence="1">
        <name>Mn(2+)</name>
        <dbReference type="ChEBI" id="CHEBI:29035"/>
    </cofactor>
    <cofactor evidence="1">
        <name>Mg(2+)</name>
        <dbReference type="ChEBI" id="CHEBI:18420"/>
    </cofactor>
    <text evidence="1">Manganese or magnesium. Binds 1 divalent metal ion per monomer in the absence of substrate. May bind a second metal ion after substrate binding.</text>
</comment>
<comment type="subcellular location">
    <subcellularLocation>
        <location evidence="1">Cytoplasm</location>
    </subcellularLocation>
</comment>
<comment type="similarity">
    <text evidence="1">Belongs to the RNase HII family.</text>
</comment>
<evidence type="ECO:0000255" key="1">
    <source>
        <dbReference type="HAMAP-Rule" id="MF_00052"/>
    </source>
</evidence>
<evidence type="ECO:0000255" key="2">
    <source>
        <dbReference type="PROSITE-ProRule" id="PRU01319"/>
    </source>
</evidence>
<feature type="chain" id="PRO_1000194454" description="Ribonuclease HII">
    <location>
        <begin position="1"/>
        <end position="216"/>
    </location>
</feature>
<feature type="domain" description="RNase H type-2" evidence="2">
    <location>
        <begin position="27"/>
        <end position="216"/>
    </location>
</feature>
<feature type="binding site" evidence="1">
    <location>
        <position position="33"/>
    </location>
    <ligand>
        <name>a divalent metal cation</name>
        <dbReference type="ChEBI" id="CHEBI:60240"/>
    </ligand>
</feature>
<feature type="binding site" evidence="1">
    <location>
        <position position="34"/>
    </location>
    <ligand>
        <name>a divalent metal cation</name>
        <dbReference type="ChEBI" id="CHEBI:60240"/>
    </ligand>
</feature>
<feature type="binding site" evidence="1">
    <location>
        <position position="125"/>
    </location>
    <ligand>
        <name>a divalent metal cation</name>
        <dbReference type="ChEBI" id="CHEBI:60240"/>
    </ligand>
</feature>
<gene>
    <name evidence="1" type="primary">rnhB</name>
    <name type="ordered locus">Geob_1493</name>
</gene>
<protein>
    <recommendedName>
        <fullName evidence="1">Ribonuclease HII</fullName>
        <shortName evidence="1">RNase HII</shortName>
        <ecNumber evidence="1">3.1.26.4</ecNumber>
    </recommendedName>
</protein>
<sequence>MSSLDLFHYEKPTLLEFDSMVRCQGYASLAGVDEAGRGPLAGPVVAAAVILPAGIGLSEVDDSKKLTSGKRDELFEVIMANALAVGVGLSDAGVIDRINILQATLAAMKEALSLLFIKPDYVLVDGISKIPVTIPQKTIKKGDGTSLSIAAASIVAKVHRDRLMVSYDAEFPQYGFAAHKGYGCVDHLKAIAEYGPCPIHRMTFSGVKEHVKNCEG</sequence>